<comment type="function">
    <text evidence="1">Catalyzes the transfer of an acyl group from acyl-phosphate (acyl-PO(4)) to glycerol-3-phosphate (G3P) to form lysophosphatidic acid (LPA). This enzyme utilizes acyl-phosphate as fatty acyl donor, but not acyl-CoA or acyl-ACP.</text>
</comment>
<comment type="catalytic activity">
    <reaction evidence="1">
        <text>an acyl phosphate + sn-glycerol 3-phosphate = a 1-acyl-sn-glycero-3-phosphate + phosphate</text>
        <dbReference type="Rhea" id="RHEA:34075"/>
        <dbReference type="ChEBI" id="CHEBI:43474"/>
        <dbReference type="ChEBI" id="CHEBI:57597"/>
        <dbReference type="ChEBI" id="CHEBI:57970"/>
        <dbReference type="ChEBI" id="CHEBI:59918"/>
        <dbReference type="EC" id="2.3.1.275"/>
    </reaction>
</comment>
<comment type="pathway">
    <text evidence="1">Lipid metabolism; phospholipid metabolism.</text>
</comment>
<comment type="subunit">
    <text evidence="1">Probably interacts with PlsX.</text>
</comment>
<comment type="subcellular location">
    <subcellularLocation>
        <location evidence="1">Cell inner membrane</location>
        <topology evidence="1">Multi-pass membrane protein</topology>
    </subcellularLocation>
</comment>
<comment type="similarity">
    <text evidence="1">Belongs to the PlsY family.</text>
</comment>
<gene>
    <name evidence="1" type="primary">plsY2</name>
    <name type="ordered locus">RL2428</name>
</gene>
<proteinExistence type="inferred from homology"/>
<protein>
    <recommendedName>
        <fullName evidence="1">Glycerol-3-phosphate acyltransferase 2</fullName>
    </recommendedName>
    <alternativeName>
        <fullName evidence="1">Acyl-PO4 G3P acyltransferase 2</fullName>
    </alternativeName>
    <alternativeName>
        <fullName evidence="1">Acyl-phosphate--glycerol-3-phosphate acyltransferase 2</fullName>
    </alternativeName>
    <alternativeName>
        <fullName evidence="1">G3P acyltransferase 2</fullName>
        <shortName evidence="1">GPAT 2</shortName>
        <ecNumber evidence="1">2.3.1.275</ecNumber>
    </alternativeName>
    <alternativeName>
        <fullName evidence="1">Lysophosphatidic acid synthase 2</fullName>
        <shortName evidence="1">LPA synthase 2</shortName>
    </alternativeName>
</protein>
<evidence type="ECO:0000255" key="1">
    <source>
        <dbReference type="HAMAP-Rule" id="MF_01043"/>
    </source>
</evidence>
<feature type="chain" id="PRO_0000250322" description="Glycerol-3-phosphate acyltransferase 2">
    <location>
        <begin position="1"/>
        <end position="219"/>
    </location>
</feature>
<feature type="transmembrane region" description="Helical" evidence="1">
    <location>
        <begin position="1"/>
        <end position="21"/>
    </location>
</feature>
<feature type="transmembrane region" description="Helical" evidence="1">
    <location>
        <begin position="55"/>
        <end position="75"/>
    </location>
</feature>
<feature type="transmembrane region" description="Helical" evidence="1">
    <location>
        <begin position="93"/>
        <end position="113"/>
    </location>
</feature>
<feature type="transmembrane region" description="Helical" evidence="1">
    <location>
        <begin position="135"/>
        <end position="155"/>
    </location>
</feature>
<feature type="transmembrane region" description="Helical" evidence="1">
    <location>
        <begin position="160"/>
        <end position="180"/>
    </location>
</feature>
<sequence length="219" mass="22948">MVFWIAGAVGLAIAYLLGSTPSGYLAGKLIRGIDIREHGSKSTGATNVLRTLGKWPALVVLLVDVLKGVGAVVFARWFYSWFSTLSSGMPPTALDLQSLEPWAVCLTGLAVLLGHGRSVWLNFTGGKSVAAGLGVLLAMSWPVGLGAAMVFGVALAISRIVSLSSMLAALTAIALVCGLEQPLPYRLLVIAGGIYVIARHRTNIRRLLAGTEPRLGKVA</sequence>
<reference key="1">
    <citation type="journal article" date="2006" name="Genome Biol.">
        <title>The genome of Rhizobium leguminosarum has recognizable core and accessory components.</title>
        <authorList>
            <person name="Young J.P.W."/>
            <person name="Crossman L.C."/>
            <person name="Johnston A.W.B."/>
            <person name="Thomson N.R."/>
            <person name="Ghazoui Z.F."/>
            <person name="Hull K.H."/>
            <person name="Wexler M."/>
            <person name="Curson A.R.J."/>
            <person name="Todd J.D."/>
            <person name="Poole P.S."/>
            <person name="Mauchline T.H."/>
            <person name="East A.K."/>
            <person name="Quail M.A."/>
            <person name="Churcher C."/>
            <person name="Arrowsmith C."/>
            <person name="Cherevach I."/>
            <person name="Chillingworth T."/>
            <person name="Clarke K."/>
            <person name="Cronin A."/>
            <person name="Davis P."/>
            <person name="Fraser A."/>
            <person name="Hance Z."/>
            <person name="Hauser H."/>
            <person name="Jagels K."/>
            <person name="Moule S."/>
            <person name="Mungall K."/>
            <person name="Norbertczak H."/>
            <person name="Rabbinowitsch E."/>
            <person name="Sanders M."/>
            <person name="Simmonds M."/>
            <person name="Whitehead S."/>
            <person name="Parkhill J."/>
        </authorList>
    </citation>
    <scope>NUCLEOTIDE SEQUENCE [LARGE SCALE GENOMIC DNA]</scope>
    <source>
        <strain>DSM 114642 / LMG 32736 / 3841</strain>
    </source>
</reference>
<organism>
    <name type="scientific">Rhizobium johnstonii (strain DSM 114642 / LMG 32736 / 3841)</name>
    <name type="common">Rhizobium leguminosarum bv. viciae</name>
    <dbReference type="NCBI Taxonomy" id="216596"/>
    <lineage>
        <taxon>Bacteria</taxon>
        <taxon>Pseudomonadati</taxon>
        <taxon>Pseudomonadota</taxon>
        <taxon>Alphaproteobacteria</taxon>
        <taxon>Hyphomicrobiales</taxon>
        <taxon>Rhizobiaceae</taxon>
        <taxon>Rhizobium/Agrobacterium group</taxon>
        <taxon>Rhizobium</taxon>
        <taxon>Rhizobium johnstonii</taxon>
    </lineage>
</organism>
<name>PLSY2_RHIJ3</name>
<keyword id="KW-0997">Cell inner membrane</keyword>
<keyword id="KW-1003">Cell membrane</keyword>
<keyword id="KW-0444">Lipid biosynthesis</keyword>
<keyword id="KW-0443">Lipid metabolism</keyword>
<keyword id="KW-0472">Membrane</keyword>
<keyword id="KW-0594">Phospholipid biosynthesis</keyword>
<keyword id="KW-1208">Phospholipid metabolism</keyword>
<keyword id="KW-0808">Transferase</keyword>
<keyword id="KW-0812">Transmembrane</keyword>
<keyword id="KW-1133">Transmembrane helix</keyword>
<accession>Q1MGK1</accession>
<dbReference type="EC" id="2.3.1.275" evidence="1"/>
<dbReference type="EMBL" id="AM236080">
    <property type="protein sequence ID" value="CAK07918.1"/>
    <property type="molecule type" value="Genomic_DNA"/>
</dbReference>
<dbReference type="SMR" id="Q1MGK1"/>
<dbReference type="EnsemblBacteria" id="CAK07918">
    <property type="protein sequence ID" value="CAK07918"/>
    <property type="gene ID" value="RL2428"/>
</dbReference>
<dbReference type="KEGG" id="rle:RL2428"/>
<dbReference type="eggNOG" id="COG0344">
    <property type="taxonomic scope" value="Bacteria"/>
</dbReference>
<dbReference type="HOGENOM" id="CLU_081254_7_1_5"/>
<dbReference type="UniPathway" id="UPA00085"/>
<dbReference type="Proteomes" id="UP000006575">
    <property type="component" value="Chromosome"/>
</dbReference>
<dbReference type="GO" id="GO:0005886">
    <property type="term" value="C:plasma membrane"/>
    <property type="evidence" value="ECO:0007669"/>
    <property type="project" value="UniProtKB-SubCell"/>
</dbReference>
<dbReference type="GO" id="GO:0043772">
    <property type="term" value="F:acyl-phosphate glycerol-3-phosphate acyltransferase activity"/>
    <property type="evidence" value="ECO:0007669"/>
    <property type="project" value="UniProtKB-UniRule"/>
</dbReference>
<dbReference type="GO" id="GO:0008654">
    <property type="term" value="P:phospholipid biosynthetic process"/>
    <property type="evidence" value="ECO:0007669"/>
    <property type="project" value="UniProtKB-UniRule"/>
</dbReference>
<dbReference type="HAMAP" id="MF_01043">
    <property type="entry name" value="PlsY"/>
    <property type="match status" value="1"/>
</dbReference>
<dbReference type="InterPro" id="IPR003811">
    <property type="entry name" value="G3P_acylTferase_PlsY"/>
</dbReference>
<dbReference type="NCBIfam" id="TIGR00023">
    <property type="entry name" value="glycerol-3-phosphate 1-O-acyltransferase PlsY"/>
    <property type="match status" value="1"/>
</dbReference>
<dbReference type="PANTHER" id="PTHR30309:SF0">
    <property type="entry name" value="GLYCEROL-3-PHOSPHATE ACYLTRANSFERASE-RELATED"/>
    <property type="match status" value="1"/>
</dbReference>
<dbReference type="PANTHER" id="PTHR30309">
    <property type="entry name" value="INNER MEMBRANE PROTEIN YGIH"/>
    <property type="match status" value="1"/>
</dbReference>
<dbReference type="Pfam" id="PF02660">
    <property type="entry name" value="G3P_acyltransf"/>
    <property type="match status" value="1"/>
</dbReference>
<dbReference type="SMART" id="SM01207">
    <property type="entry name" value="G3P_acyltransf"/>
    <property type="match status" value="1"/>
</dbReference>